<organism>
    <name type="scientific">Streptococcus pneumoniae (strain ATCC 700669 / Spain 23F-1)</name>
    <dbReference type="NCBI Taxonomy" id="561276"/>
    <lineage>
        <taxon>Bacteria</taxon>
        <taxon>Bacillati</taxon>
        <taxon>Bacillota</taxon>
        <taxon>Bacilli</taxon>
        <taxon>Lactobacillales</taxon>
        <taxon>Streptococcaceae</taxon>
        <taxon>Streptococcus</taxon>
    </lineage>
</organism>
<gene>
    <name evidence="1" type="primary">aroA</name>
    <name type="ordered locus">SPN23F13370</name>
</gene>
<protein>
    <recommendedName>
        <fullName evidence="1">3-phosphoshikimate 1-carboxyvinyltransferase</fullName>
        <ecNumber evidence="1">2.5.1.19</ecNumber>
    </recommendedName>
    <alternativeName>
        <fullName evidence="1">5-enolpyruvylshikimate-3-phosphate synthase</fullName>
        <shortName evidence="1">EPSP synthase</shortName>
        <shortName evidence="1">EPSPS</shortName>
    </alternativeName>
</protein>
<dbReference type="EC" id="2.5.1.19" evidence="1"/>
<dbReference type="EMBL" id="FM211187">
    <property type="protein sequence ID" value="CAR69137.1"/>
    <property type="molecule type" value="Genomic_DNA"/>
</dbReference>
<dbReference type="RefSeq" id="WP_000769886.1">
    <property type="nucleotide sequence ID" value="NC_011900.1"/>
</dbReference>
<dbReference type="SMR" id="B8ZKM0"/>
<dbReference type="KEGG" id="sne:SPN23F13370"/>
<dbReference type="HOGENOM" id="CLU_024321_0_1_9"/>
<dbReference type="UniPathway" id="UPA00053">
    <property type="reaction ID" value="UER00089"/>
</dbReference>
<dbReference type="GO" id="GO:0005737">
    <property type="term" value="C:cytoplasm"/>
    <property type="evidence" value="ECO:0007669"/>
    <property type="project" value="UniProtKB-SubCell"/>
</dbReference>
<dbReference type="GO" id="GO:0003866">
    <property type="term" value="F:3-phosphoshikimate 1-carboxyvinyltransferase activity"/>
    <property type="evidence" value="ECO:0007669"/>
    <property type="project" value="UniProtKB-UniRule"/>
</dbReference>
<dbReference type="GO" id="GO:0008652">
    <property type="term" value="P:amino acid biosynthetic process"/>
    <property type="evidence" value="ECO:0007669"/>
    <property type="project" value="UniProtKB-KW"/>
</dbReference>
<dbReference type="GO" id="GO:0009073">
    <property type="term" value="P:aromatic amino acid family biosynthetic process"/>
    <property type="evidence" value="ECO:0007669"/>
    <property type="project" value="UniProtKB-KW"/>
</dbReference>
<dbReference type="GO" id="GO:0009423">
    <property type="term" value="P:chorismate biosynthetic process"/>
    <property type="evidence" value="ECO:0007669"/>
    <property type="project" value="UniProtKB-UniRule"/>
</dbReference>
<dbReference type="CDD" id="cd01554">
    <property type="entry name" value="EPT-like"/>
    <property type="match status" value="1"/>
</dbReference>
<dbReference type="FunFam" id="3.65.10.10:FF:000005">
    <property type="entry name" value="3-phosphoshikimate 1-carboxyvinyltransferase"/>
    <property type="match status" value="1"/>
</dbReference>
<dbReference type="FunFam" id="3.65.10.10:FF:000006">
    <property type="entry name" value="3-phosphoshikimate 1-carboxyvinyltransferase"/>
    <property type="match status" value="1"/>
</dbReference>
<dbReference type="Gene3D" id="3.65.10.10">
    <property type="entry name" value="Enolpyruvate transferase domain"/>
    <property type="match status" value="2"/>
</dbReference>
<dbReference type="HAMAP" id="MF_00210">
    <property type="entry name" value="EPSP_synth"/>
    <property type="match status" value="1"/>
</dbReference>
<dbReference type="InterPro" id="IPR001986">
    <property type="entry name" value="Enolpyruvate_Tfrase_dom"/>
</dbReference>
<dbReference type="InterPro" id="IPR036968">
    <property type="entry name" value="Enolpyruvate_Tfrase_sf"/>
</dbReference>
<dbReference type="InterPro" id="IPR006264">
    <property type="entry name" value="EPSP_synthase"/>
</dbReference>
<dbReference type="InterPro" id="IPR023193">
    <property type="entry name" value="EPSP_synthase_CS"/>
</dbReference>
<dbReference type="InterPro" id="IPR013792">
    <property type="entry name" value="RNA3'P_cycl/enolpyr_Trfase_a/b"/>
</dbReference>
<dbReference type="NCBIfam" id="TIGR01356">
    <property type="entry name" value="aroA"/>
    <property type="match status" value="1"/>
</dbReference>
<dbReference type="PANTHER" id="PTHR21090">
    <property type="entry name" value="AROM/DEHYDROQUINATE SYNTHASE"/>
    <property type="match status" value="1"/>
</dbReference>
<dbReference type="PANTHER" id="PTHR21090:SF5">
    <property type="entry name" value="PENTAFUNCTIONAL AROM POLYPEPTIDE"/>
    <property type="match status" value="1"/>
</dbReference>
<dbReference type="Pfam" id="PF00275">
    <property type="entry name" value="EPSP_synthase"/>
    <property type="match status" value="1"/>
</dbReference>
<dbReference type="PIRSF" id="PIRSF000505">
    <property type="entry name" value="EPSPS"/>
    <property type="match status" value="1"/>
</dbReference>
<dbReference type="SUPFAM" id="SSF55205">
    <property type="entry name" value="EPT/RTPC-like"/>
    <property type="match status" value="1"/>
</dbReference>
<dbReference type="PROSITE" id="PS00104">
    <property type="entry name" value="EPSP_SYNTHASE_1"/>
    <property type="match status" value="1"/>
</dbReference>
<dbReference type="PROSITE" id="PS00885">
    <property type="entry name" value="EPSP_SYNTHASE_2"/>
    <property type="match status" value="1"/>
</dbReference>
<sequence length="427" mass="45738">MKLKTNIRHLHGSIRVPGDKSISHRSIIFGSLAEGETKVYDILRGEDVLSTMQVFRDLGVEIEDKDGVITIQGVGMAGLKAPQNALNMGNSGTSIRLISGVLAGADFEVEMFGDDSLSKRPMDRVTLPLKKMGVSISGQTERDLPPLRLKGTKNLRPIHYELPIASAQVKSALMFAALQAKGESVIIEKECTRNHTEDMLKQFGGHLSVDGKKITVQGPQKLTGQKVVVPGDISSAAFWLVAGLIVPNSRLVLQNVGINETRTGIIDVIRAMGGKLEITEIDPVAKSSTLTVESSDLKGTEIGGALIPRLIDELPIIALLATQAQGVTVIKDAEELKVKETDRIQVVADALNSMGADITPTADGMIIKGKSALHGARVNTFGDHRIGMMTAIAALLVADGEVELDRAEAINTSYPSFFDDLESLIHG</sequence>
<reference key="1">
    <citation type="journal article" date="2009" name="J. Bacteriol.">
        <title>Role of conjugative elements in the evolution of the multidrug-resistant pandemic clone Streptococcus pneumoniae Spain23F ST81.</title>
        <authorList>
            <person name="Croucher N.J."/>
            <person name="Walker D."/>
            <person name="Romero P."/>
            <person name="Lennard N."/>
            <person name="Paterson G.K."/>
            <person name="Bason N.C."/>
            <person name="Mitchell A.M."/>
            <person name="Quail M.A."/>
            <person name="Andrew P.W."/>
            <person name="Parkhill J."/>
            <person name="Bentley S.D."/>
            <person name="Mitchell T.J."/>
        </authorList>
    </citation>
    <scope>NUCLEOTIDE SEQUENCE [LARGE SCALE GENOMIC DNA]</scope>
    <source>
        <strain>ATCC 700669 / Spain 23F-1</strain>
    </source>
</reference>
<evidence type="ECO:0000255" key="1">
    <source>
        <dbReference type="HAMAP-Rule" id="MF_00210"/>
    </source>
</evidence>
<proteinExistence type="inferred from homology"/>
<feature type="chain" id="PRO_1000124709" description="3-phosphoshikimate 1-carboxyvinyltransferase">
    <location>
        <begin position="1"/>
        <end position="427"/>
    </location>
</feature>
<feature type="active site" description="Proton acceptor" evidence="1">
    <location>
        <position position="312"/>
    </location>
</feature>
<feature type="binding site" evidence="1">
    <location>
        <position position="20"/>
    </location>
    <ligand>
        <name>3-phosphoshikimate</name>
        <dbReference type="ChEBI" id="CHEBI:145989"/>
    </ligand>
</feature>
<feature type="binding site" evidence="1">
    <location>
        <position position="20"/>
    </location>
    <ligand>
        <name>phosphoenolpyruvate</name>
        <dbReference type="ChEBI" id="CHEBI:58702"/>
    </ligand>
</feature>
<feature type="binding site" evidence="1">
    <location>
        <position position="21"/>
    </location>
    <ligand>
        <name>3-phosphoshikimate</name>
        <dbReference type="ChEBI" id="CHEBI:145989"/>
    </ligand>
</feature>
<feature type="binding site" evidence="1">
    <location>
        <position position="25"/>
    </location>
    <ligand>
        <name>3-phosphoshikimate</name>
        <dbReference type="ChEBI" id="CHEBI:145989"/>
    </ligand>
</feature>
<feature type="binding site" evidence="1">
    <location>
        <position position="92"/>
    </location>
    <ligand>
        <name>phosphoenolpyruvate</name>
        <dbReference type="ChEBI" id="CHEBI:58702"/>
    </ligand>
</feature>
<feature type="binding site" evidence="1">
    <location>
        <position position="120"/>
    </location>
    <ligand>
        <name>phosphoenolpyruvate</name>
        <dbReference type="ChEBI" id="CHEBI:58702"/>
    </ligand>
</feature>
<feature type="binding site" evidence="1">
    <location>
        <position position="166"/>
    </location>
    <ligand>
        <name>3-phosphoshikimate</name>
        <dbReference type="ChEBI" id="CHEBI:145989"/>
    </ligand>
</feature>
<feature type="binding site" evidence="1">
    <location>
        <position position="168"/>
    </location>
    <ligand>
        <name>3-phosphoshikimate</name>
        <dbReference type="ChEBI" id="CHEBI:145989"/>
    </ligand>
</feature>
<feature type="binding site" evidence="1">
    <location>
        <position position="168"/>
    </location>
    <ligand>
        <name>phosphoenolpyruvate</name>
        <dbReference type="ChEBI" id="CHEBI:58702"/>
    </ligand>
</feature>
<feature type="binding site" evidence="1">
    <location>
        <position position="312"/>
    </location>
    <ligand>
        <name>3-phosphoshikimate</name>
        <dbReference type="ChEBI" id="CHEBI:145989"/>
    </ligand>
</feature>
<feature type="binding site" evidence="1">
    <location>
        <position position="339"/>
    </location>
    <ligand>
        <name>3-phosphoshikimate</name>
        <dbReference type="ChEBI" id="CHEBI:145989"/>
    </ligand>
</feature>
<feature type="binding site" evidence="1">
    <location>
        <position position="343"/>
    </location>
    <ligand>
        <name>phosphoenolpyruvate</name>
        <dbReference type="ChEBI" id="CHEBI:58702"/>
    </ligand>
</feature>
<feature type="binding site" evidence="1">
    <location>
        <position position="385"/>
    </location>
    <ligand>
        <name>phosphoenolpyruvate</name>
        <dbReference type="ChEBI" id="CHEBI:58702"/>
    </ligand>
</feature>
<name>AROA_STRPJ</name>
<accession>B8ZKM0</accession>
<comment type="function">
    <text evidence="1">Catalyzes the transfer of the enolpyruvyl moiety of phosphoenolpyruvate (PEP) to the 5-hydroxyl of shikimate-3-phosphate (S3P) to produce enolpyruvyl shikimate-3-phosphate and inorganic phosphate.</text>
</comment>
<comment type="catalytic activity">
    <reaction evidence="1">
        <text>3-phosphoshikimate + phosphoenolpyruvate = 5-O-(1-carboxyvinyl)-3-phosphoshikimate + phosphate</text>
        <dbReference type="Rhea" id="RHEA:21256"/>
        <dbReference type="ChEBI" id="CHEBI:43474"/>
        <dbReference type="ChEBI" id="CHEBI:57701"/>
        <dbReference type="ChEBI" id="CHEBI:58702"/>
        <dbReference type="ChEBI" id="CHEBI:145989"/>
        <dbReference type="EC" id="2.5.1.19"/>
    </reaction>
    <physiologicalReaction direction="left-to-right" evidence="1">
        <dbReference type="Rhea" id="RHEA:21257"/>
    </physiologicalReaction>
</comment>
<comment type="pathway">
    <text evidence="1">Metabolic intermediate biosynthesis; chorismate biosynthesis; chorismate from D-erythrose 4-phosphate and phosphoenolpyruvate: step 6/7.</text>
</comment>
<comment type="subunit">
    <text evidence="1">Monomer.</text>
</comment>
<comment type="subcellular location">
    <subcellularLocation>
        <location evidence="1">Cytoplasm</location>
    </subcellularLocation>
</comment>
<comment type="similarity">
    <text evidence="1">Belongs to the EPSP synthase family.</text>
</comment>
<keyword id="KW-0028">Amino-acid biosynthesis</keyword>
<keyword id="KW-0057">Aromatic amino acid biosynthesis</keyword>
<keyword id="KW-0963">Cytoplasm</keyword>
<keyword id="KW-0808">Transferase</keyword>